<protein>
    <recommendedName>
        <fullName>HTH-type transcriptional regulator GadW</fullName>
    </recommendedName>
</protein>
<keyword id="KW-0010">Activator</keyword>
<keyword id="KW-0238">DNA-binding</keyword>
<keyword id="KW-1185">Reference proteome</keyword>
<keyword id="KW-0678">Repressor</keyword>
<keyword id="KW-0804">Transcription</keyword>
<keyword id="KW-0805">Transcription regulation</keyword>
<feature type="chain" id="PRO_0000194515" description="HTH-type transcriptional regulator GadW">
    <location>
        <begin position="1"/>
        <end position="242"/>
    </location>
</feature>
<feature type="domain" description="HTH araC/xylS-type" evidence="2">
    <location>
        <begin position="139"/>
        <end position="236"/>
    </location>
</feature>
<feature type="DNA-binding region" description="H-T-H motif" evidence="2">
    <location>
        <begin position="156"/>
        <end position="177"/>
    </location>
</feature>
<feature type="DNA-binding region" description="H-T-H motif" evidence="2">
    <location>
        <begin position="203"/>
        <end position="226"/>
    </location>
</feature>
<name>GADW_ECOL6</name>
<evidence type="ECO:0000250" key="1"/>
<evidence type="ECO:0000255" key="2">
    <source>
        <dbReference type="PROSITE-ProRule" id="PRU00593"/>
    </source>
</evidence>
<proteinExistence type="inferred from homology"/>
<gene>
    <name type="primary">gadW</name>
    <name type="ordered locus">c4326</name>
</gene>
<sequence length="242" mass="28113">MAHVCSVILVRRSFDIHHEQQKISLHNESILLLDKNLADDFAFCSLDTRRLDIEELTVCHYLQNIRQLPRNLGLHSKDRLLINQSPPIQLVTAIFDSFNDPRVNSPILSKMLYLSCLSMFSHKKELIPLLFNSISTVSGKVERLISFDIAKRWYLRDIAERMYTSESLIKKKLQDENTCFSKILLASRMSMARRLLELRQIPLHTIAEKCGYSSTSYFINTFRQYYGVTPHQFSQHSPGTFS</sequence>
<comment type="function">
    <text evidence="1">Depending on the conditions (growth phase and medium), acts as a positive or negative regulator of gadA and gadBC. Repression occurs directly or via the repression of the expression of gadX. Activation occurs directly by the binding of GadW to the gadA and gadBC promoters (By similarity).</text>
</comment>
<comment type="subunit">
    <text evidence="1">Homodimer.</text>
</comment>
<comment type="induction">
    <text evidence="1">Expression can be repressed by GadX, depending on the conditions.</text>
</comment>
<accession>Q8FCI7</accession>
<dbReference type="EMBL" id="AE014075">
    <property type="protein sequence ID" value="AAN82762.1"/>
    <property type="molecule type" value="Genomic_DNA"/>
</dbReference>
<dbReference type="RefSeq" id="WP_000951553.1">
    <property type="nucleotide sequence ID" value="NZ_CP051263.1"/>
</dbReference>
<dbReference type="SMR" id="Q8FCI7"/>
<dbReference type="STRING" id="199310.c4326"/>
<dbReference type="CARD" id="ARO:3003838">
    <property type="molecule name" value="gadW"/>
    <property type="mechanism identifier" value="ARO:0010000"/>
    <property type="mechanism name" value="antibiotic efflux"/>
</dbReference>
<dbReference type="DNASU" id="1037214"/>
<dbReference type="KEGG" id="ecc:c4326"/>
<dbReference type="eggNOG" id="COG2207">
    <property type="taxonomic scope" value="Bacteria"/>
</dbReference>
<dbReference type="HOGENOM" id="CLU_000445_81_4_6"/>
<dbReference type="BioCyc" id="ECOL199310:C4326-MONOMER"/>
<dbReference type="Proteomes" id="UP000001410">
    <property type="component" value="Chromosome"/>
</dbReference>
<dbReference type="GO" id="GO:0005829">
    <property type="term" value="C:cytosol"/>
    <property type="evidence" value="ECO:0007669"/>
    <property type="project" value="TreeGrafter"/>
</dbReference>
<dbReference type="GO" id="GO:0003700">
    <property type="term" value="F:DNA-binding transcription factor activity"/>
    <property type="evidence" value="ECO:0007669"/>
    <property type="project" value="InterPro"/>
</dbReference>
<dbReference type="GO" id="GO:0000976">
    <property type="term" value="F:transcription cis-regulatory region binding"/>
    <property type="evidence" value="ECO:0007669"/>
    <property type="project" value="TreeGrafter"/>
</dbReference>
<dbReference type="FunFam" id="1.10.10.60:FF:000278">
    <property type="entry name" value="HTH-type transcriptional regulator GadW"/>
    <property type="match status" value="1"/>
</dbReference>
<dbReference type="Gene3D" id="1.10.10.60">
    <property type="entry name" value="Homeodomain-like"/>
    <property type="match status" value="1"/>
</dbReference>
<dbReference type="InterPro" id="IPR009057">
    <property type="entry name" value="Homeodomain-like_sf"/>
</dbReference>
<dbReference type="InterPro" id="IPR018060">
    <property type="entry name" value="HTH_AraC"/>
</dbReference>
<dbReference type="InterPro" id="IPR018062">
    <property type="entry name" value="HTH_AraC-typ_CS"/>
</dbReference>
<dbReference type="InterPro" id="IPR020449">
    <property type="entry name" value="Tscrpt_reg_AraC-type_HTH"/>
</dbReference>
<dbReference type="PANTHER" id="PTHR47894">
    <property type="entry name" value="HTH-TYPE TRANSCRIPTIONAL REGULATOR GADX"/>
    <property type="match status" value="1"/>
</dbReference>
<dbReference type="PANTHER" id="PTHR47894:SF4">
    <property type="entry name" value="HTH-TYPE TRANSCRIPTIONAL REGULATOR GADX"/>
    <property type="match status" value="1"/>
</dbReference>
<dbReference type="Pfam" id="PF12833">
    <property type="entry name" value="HTH_18"/>
    <property type="match status" value="1"/>
</dbReference>
<dbReference type="PRINTS" id="PR00032">
    <property type="entry name" value="HTHARAC"/>
</dbReference>
<dbReference type="SMART" id="SM00342">
    <property type="entry name" value="HTH_ARAC"/>
    <property type="match status" value="1"/>
</dbReference>
<dbReference type="SUPFAM" id="SSF46689">
    <property type="entry name" value="Homeodomain-like"/>
    <property type="match status" value="1"/>
</dbReference>
<dbReference type="PROSITE" id="PS00041">
    <property type="entry name" value="HTH_ARAC_FAMILY_1"/>
    <property type="match status" value="1"/>
</dbReference>
<dbReference type="PROSITE" id="PS01124">
    <property type="entry name" value="HTH_ARAC_FAMILY_2"/>
    <property type="match status" value="1"/>
</dbReference>
<reference key="1">
    <citation type="journal article" date="2002" name="Proc. Natl. Acad. Sci. U.S.A.">
        <title>Extensive mosaic structure revealed by the complete genome sequence of uropathogenic Escherichia coli.</title>
        <authorList>
            <person name="Welch R.A."/>
            <person name="Burland V."/>
            <person name="Plunkett G. III"/>
            <person name="Redford P."/>
            <person name="Roesch P."/>
            <person name="Rasko D."/>
            <person name="Buckles E.L."/>
            <person name="Liou S.-R."/>
            <person name="Boutin A."/>
            <person name="Hackett J."/>
            <person name="Stroud D."/>
            <person name="Mayhew G.F."/>
            <person name="Rose D.J."/>
            <person name="Zhou S."/>
            <person name="Schwartz D.C."/>
            <person name="Perna N.T."/>
            <person name="Mobley H.L.T."/>
            <person name="Donnenberg M.S."/>
            <person name="Blattner F.R."/>
        </authorList>
    </citation>
    <scope>NUCLEOTIDE SEQUENCE [LARGE SCALE GENOMIC DNA]</scope>
    <source>
        <strain>CFT073 / ATCC 700928 / UPEC</strain>
    </source>
</reference>
<organism>
    <name type="scientific">Escherichia coli O6:H1 (strain CFT073 / ATCC 700928 / UPEC)</name>
    <dbReference type="NCBI Taxonomy" id="199310"/>
    <lineage>
        <taxon>Bacteria</taxon>
        <taxon>Pseudomonadati</taxon>
        <taxon>Pseudomonadota</taxon>
        <taxon>Gammaproteobacteria</taxon>
        <taxon>Enterobacterales</taxon>
        <taxon>Enterobacteriaceae</taxon>
        <taxon>Escherichia</taxon>
    </lineage>
</organism>